<keyword id="KW-0548">Nucleotidyltransferase</keyword>
<keyword id="KW-0694">RNA-binding</keyword>
<keyword id="KW-0698">rRNA processing</keyword>
<keyword id="KW-0808">Transferase</keyword>
<keyword id="KW-0819">tRNA processing</keyword>
<keyword id="KW-0820">tRNA-binding</keyword>
<comment type="function">
    <text evidence="1">Phosphorolytic 3'-5' exoribonuclease that plays an important role in tRNA 3'-end maturation. Removes nucleotide residues following the 3'-CCA terminus of tRNAs; can also add nucleotides to the ends of RNA molecules by using nucleoside diphosphates as substrates, but this may not be physiologically important. Probably plays a role in initiation of 16S rRNA degradation (leading to ribosome degradation) during starvation.</text>
</comment>
<comment type="catalytic activity">
    <reaction evidence="1">
        <text>tRNA(n+1) + phosphate = tRNA(n) + a ribonucleoside 5'-diphosphate</text>
        <dbReference type="Rhea" id="RHEA:10628"/>
        <dbReference type="Rhea" id="RHEA-COMP:17343"/>
        <dbReference type="Rhea" id="RHEA-COMP:17344"/>
        <dbReference type="ChEBI" id="CHEBI:43474"/>
        <dbReference type="ChEBI" id="CHEBI:57930"/>
        <dbReference type="ChEBI" id="CHEBI:173114"/>
        <dbReference type="EC" id="2.7.7.56"/>
    </reaction>
</comment>
<comment type="subunit">
    <text evidence="1">Homohexameric ring arranged as a trimer of dimers.</text>
</comment>
<comment type="similarity">
    <text evidence="1">Belongs to the RNase PH family.</text>
</comment>
<organism>
    <name type="scientific">Legionella pneumophila (strain Lens)</name>
    <dbReference type="NCBI Taxonomy" id="297245"/>
    <lineage>
        <taxon>Bacteria</taxon>
        <taxon>Pseudomonadati</taxon>
        <taxon>Pseudomonadota</taxon>
        <taxon>Gammaproteobacteria</taxon>
        <taxon>Legionellales</taxon>
        <taxon>Legionellaceae</taxon>
        <taxon>Legionella</taxon>
    </lineage>
</organism>
<reference key="1">
    <citation type="journal article" date="2004" name="Nat. Genet.">
        <title>Evidence in the Legionella pneumophila genome for exploitation of host cell functions and high genome plasticity.</title>
        <authorList>
            <person name="Cazalet C."/>
            <person name="Rusniok C."/>
            <person name="Brueggemann H."/>
            <person name="Zidane N."/>
            <person name="Magnier A."/>
            <person name="Ma L."/>
            <person name="Tichit M."/>
            <person name="Jarraud S."/>
            <person name="Bouchier C."/>
            <person name="Vandenesch F."/>
            <person name="Kunst F."/>
            <person name="Etienne J."/>
            <person name="Glaser P."/>
            <person name="Buchrieser C."/>
        </authorList>
    </citation>
    <scope>NUCLEOTIDE SEQUENCE [LARGE SCALE GENOMIC DNA]</scope>
    <source>
        <strain>Lens</strain>
    </source>
</reference>
<sequence length="235" mass="26110">MRPSNREHDQLRPVTITRNFTNYAEGSVLVEFGQTKVICNASIVEGVPRFLKGKNQGWITAEYGMLPRATHSRTEREASKGKQGGRTLEIQRLIGRSLRACIDLKVLGENTITLDCDVIQADGGTRTAAITGSCVAMRDAIHWMVQREKIKKMPAFNYVAAVSVGIYRGQPVLDLDYAEDVLAETDMNVVMNEQGHFIEVQGTAEDNSFNREQLNSMLSLAEIGIPQLIEIQKNA</sequence>
<evidence type="ECO:0000255" key="1">
    <source>
        <dbReference type="HAMAP-Rule" id="MF_00564"/>
    </source>
</evidence>
<protein>
    <recommendedName>
        <fullName evidence="1">Ribonuclease PH</fullName>
        <shortName evidence="1">RNase PH</shortName>
        <ecNumber evidence="1">2.7.7.56</ecNumber>
    </recommendedName>
    <alternativeName>
        <fullName evidence="1">tRNA nucleotidyltransferase</fullName>
    </alternativeName>
</protein>
<dbReference type="EC" id="2.7.7.56" evidence="1"/>
<dbReference type="EMBL" id="CR628337">
    <property type="protein sequence ID" value="CAH16229.1"/>
    <property type="molecule type" value="Genomic_DNA"/>
</dbReference>
<dbReference type="RefSeq" id="WP_010947728.1">
    <property type="nucleotide sequence ID" value="NC_006369.1"/>
</dbReference>
<dbReference type="SMR" id="Q5WV28"/>
<dbReference type="GeneID" id="57036006"/>
<dbReference type="KEGG" id="lpf:lpl1989"/>
<dbReference type="LegioList" id="lpl1989"/>
<dbReference type="HOGENOM" id="CLU_050858_0_0_6"/>
<dbReference type="Proteomes" id="UP000002517">
    <property type="component" value="Chromosome"/>
</dbReference>
<dbReference type="GO" id="GO:0000175">
    <property type="term" value="F:3'-5'-RNA exonuclease activity"/>
    <property type="evidence" value="ECO:0007669"/>
    <property type="project" value="UniProtKB-UniRule"/>
</dbReference>
<dbReference type="GO" id="GO:0000049">
    <property type="term" value="F:tRNA binding"/>
    <property type="evidence" value="ECO:0007669"/>
    <property type="project" value="UniProtKB-UniRule"/>
</dbReference>
<dbReference type="GO" id="GO:0009022">
    <property type="term" value="F:tRNA nucleotidyltransferase activity"/>
    <property type="evidence" value="ECO:0007669"/>
    <property type="project" value="UniProtKB-UniRule"/>
</dbReference>
<dbReference type="GO" id="GO:0016075">
    <property type="term" value="P:rRNA catabolic process"/>
    <property type="evidence" value="ECO:0007669"/>
    <property type="project" value="UniProtKB-UniRule"/>
</dbReference>
<dbReference type="GO" id="GO:0006364">
    <property type="term" value="P:rRNA processing"/>
    <property type="evidence" value="ECO:0007669"/>
    <property type="project" value="UniProtKB-KW"/>
</dbReference>
<dbReference type="GO" id="GO:0008033">
    <property type="term" value="P:tRNA processing"/>
    <property type="evidence" value="ECO:0007669"/>
    <property type="project" value="UniProtKB-UniRule"/>
</dbReference>
<dbReference type="CDD" id="cd11362">
    <property type="entry name" value="RNase_PH_bact"/>
    <property type="match status" value="1"/>
</dbReference>
<dbReference type="FunFam" id="3.30.230.70:FF:000003">
    <property type="entry name" value="Ribonuclease PH"/>
    <property type="match status" value="1"/>
</dbReference>
<dbReference type="Gene3D" id="3.30.230.70">
    <property type="entry name" value="GHMP Kinase, N-terminal domain"/>
    <property type="match status" value="1"/>
</dbReference>
<dbReference type="HAMAP" id="MF_00564">
    <property type="entry name" value="RNase_PH"/>
    <property type="match status" value="1"/>
</dbReference>
<dbReference type="InterPro" id="IPR001247">
    <property type="entry name" value="ExoRNase_PH_dom1"/>
</dbReference>
<dbReference type="InterPro" id="IPR015847">
    <property type="entry name" value="ExoRNase_PH_dom2"/>
</dbReference>
<dbReference type="InterPro" id="IPR036345">
    <property type="entry name" value="ExoRNase_PH_dom2_sf"/>
</dbReference>
<dbReference type="InterPro" id="IPR027408">
    <property type="entry name" value="PNPase/RNase_PH_dom_sf"/>
</dbReference>
<dbReference type="InterPro" id="IPR020568">
    <property type="entry name" value="Ribosomal_Su5_D2-typ_SF"/>
</dbReference>
<dbReference type="InterPro" id="IPR050080">
    <property type="entry name" value="RNase_PH"/>
</dbReference>
<dbReference type="InterPro" id="IPR002381">
    <property type="entry name" value="RNase_PH_bac-type"/>
</dbReference>
<dbReference type="InterPro" id="IPR018336">
    <property type="entry name" value="RNase_PH_CS"/>
</dbReference>
<dbReference type="NCBIfam" id="TIGR01966">
    <property type="entry name" value="RNasePH"/>
    <property type="match status" value="1"/>
</dbReference>
<dbReference type="PANTHER" id="PTHR11953">
    <property type="entry name" value="EXOSOME COMPLEX COMPONENT"/>
    <property type="match status" value="1"/>
</dbReference>
<dbReference type="PANTHER" id="PTHR11953:SF0">
    <property type="entry name" value="EXOSOME COMPLEX COMPONENT RRP41"/>
    <property type="match status" value="1"/>
</dbReference>
<dbReference type="Pfam" id="PF01138">
    <property type="entry name" value="RNase_PH"/>
    <property type="match status" value="1"/>
</dbReference>
<dbReference type="Pfam" id="PF03725">
    <property type="entry name" value="RNase_PH_C"/>
    <property type="match status" value="1"/>
</dbReference>
<dbReference type="SUPFAM" id="SSF55666">
    <property type="entry name" value="Ribonuclease PH domain 2-like"/>
    <property type="match status" value="1"/>
</dbReference>
<dbReference type="SUPFAM" id="SSF54211">
    <property type="entry name" value="Ribosomal protein S5 domain 2-like"/>
    <property type="match status" value="1"/>
</dbReference>
<dbReference type="PROSITE" id="PS01277">
    <property type="entry name" value="RIBONUCLEASE_PH"/>
    <property type="match status" value="1"/>
</dbReference>
<proteinExistence type="inferred from homology"/>
<name>RNPH_LEGPL</name>
<feature type="chain" id="PRO_0000139901" description="Ribonuclease PH">
    <location>
        <begin position="1"/>
        <end position="235"/>
    </location>
</feature>
<feature type="binding site" evidence="1">
    <location>
        <position position="86"/>
    </location>
    <ligand>
        <name>phosphate</name>
        <dbReference type="ChEBI" id="CHEBI:43474"/>
        <note>substrate</note>
    </ligand>
</feature>
<feature type="binding site" evidence="1">
    <location>
        <begin position="124"/>
        <end position="126"/>
    </location>
    <ligand>
        <name>phosphate</name>
        <dbReference type="ChEBI" id="CHEBI:43474"/>
        <note>substrate</note>
    </ligand>
</feature>
<gene>
    <name evidence="1" type="primary">rph</name>
    <name type="ordered locus">lpl1989</name>
</gene>
<accession>Q5WV28</accession>